<proteinExistence type="inferred from homology"/>
<protein>
    <recommendedName>
        <fullName evidence="1">dCTP deaminase</fullName>
        <ecNumber evidence="1">3.5.4.13</ecNumber>
    </recommendedName>
    <alternativeName>
        <fullName evidence="1">Deoxycytidine triphosphate deaminase</fullName>
    </alternativeName>
</protein>
<dbReference type="EC" id="3.5.4.13" evidence="1"/>
<dbReference type="EMBL" id="CU928145">
    <property type="protein sequence ID" value="CAU98194.1"/>
    <property type="molecule type" value="Genomic_DNA"/>
</dbReference>
<dbReference type="RefSeq" id="WP_001234767.1">
    <property type="nucleotide sequence ID" value="NZ_CP028304.1"/>
</dbReference>
<dbReference type="SMR" id="B7L9T9"/>
<dbReference type="GeneID" id="93775126"/>
<dbReference type="KEGG" id="eck:EC55989_2321"/>
<dbReference type="HOGENOM" id="CLU_087476_2_0_6"/>
<dbReference type="UniPathway" id="UPA00610">
    <property type="reaction ID" value="UER00665"/>
</dbReference>
<dbReference type="Proteomes" id="UP000000746">
    <property type="component" value="Chromosome"/>
</dbReference>
<dbReference type="GO" id="GO:0008829">
    <property type="term" value="F:dCTP deaminase activity"/>
    <property type="evidence" value="ECO:0007669"/>
    <property type="project" value="UniProtKB-UniRule"/>
</dbReference>
<dbReference type="GO" id="GO:0000166">
    <property type="term" value="F:nucleotide binding"/>
    <property type="evidence" value="ECO:0007669"/>
    <property type="project" value="UniProtKB-KW"/>
</dbReference>
<dbReference type="GO" id="GO:0006226">
    <property type="term" value="P:dUMP biosynthetic process"/>
    <property type="evidence" value="ECO:0007669"/>
    <property type="project" value="UniProtKB-UniPathway"/>
</dbReference>
<dbReference type="GO" id="GO:0006229">
    <property type="term" value="P:dUTP biosynthetic process"/>
    <property type="evidence" value="ECO:0007669"/>
    <property type="project" value="UniProtKB-UniRule"/>
</dbReference>
<dbReference type="GO" id="GO:0015949">
    <property type="term" value="P:nucleobase-containing small molecule interconversion"/>
    <property type="evidence" value="ECO:0007669"/>
    <property type="project" value="TreeGrafter"/>
</dbReference>
<dbReference type="CDD" id="cd07557">
    <property type="entry name" value="trimeric_dUTPase"/>
    <property type="match status" value="1"/>
</dbReference>
<dbReference type="FunFam" id="2.70.40.10:FF:000003">
    <property type="entry name" value="dCTP deaminase"/>
    <property type="match status" value="1"/>
</dbReference>
<dbReference type="Gene3D" id="2.70.40.10">
    <property type="match status" value="1"/>
</dbReference>
<dbReference type="HAMAP" id="MF_00146">
    <property type="entry name" value="dCTP_deaminase"/>
    <property type="match status" value="1"/>
</dbReference>
<dbReference type="InterPro" id="IPR011962">
    <property type="entry name" value="dCTP_deaminase"/>
</dbReference>
<dbReference type="InterPro" id="IPR036157">
    <property type="entry name" value="dUTPase-like_sf"/>
</dbReference>
<dbReference type="InterPro" id="IPR033704">
    <property type="entry name" value="dUTPase_trimeric"/>
</dbReference>
<dbReference type="NCBIfam" id="TIGR02274">
    <property type="entry name" value="dCTP_deam"/>
    <property type="match status" value="1"/>
</dbReference>
<dbReference type="PANTHER" id="PTHR42680">
    <property type="entry name" value="DCTP DEAMINASE"/>
    <property type="match status" value="1"/>
</dbReference>
<dbReference type="PANTHER" id="PTHR42680:SF3">
    <property type="entry name" value="DCTP DEAMINASE"/>
    <property type="match status" value="1"/>
</dbReference>
<dbReference type="Pfam" id="PF22769">
    <property type="entry name" value="DCD"/>
    <property type="match status" value="1"/>
</dbReference>
<dbReference type="SUPFAM" id="SSF51283">
    <property type="entry name" value="dUTPase-like"/>
    <property type="match status" value="1"/>
</dbReference>
<reference key="1">
    <citation type="journal article" date="2009" name="PLoS Genet.">
        <title>Organised genome dynamics in the Escherichia coli species results in highly diverse adaptive paths.</title>
        <authorList>
            <person name="Touchon M."/>
            <person name="Hoede C."/>
            <person name="Tenaillon O."/>
            <person name="Barbe V."/>
            <person name="Baeriswyl S."/>
            <person name="Bidet P."/>
            <person name="Bingen E."/>
            <person name="Bonacorsi S."/>
            <person name="Bouchier C."/>
            <person name="Bouvet O."/>
            <person name="Calteau A."/>
            <person name="Chiapello H."/>
            <person name="Clermont O."/>
            <person name="Cruveiller S."/>
            <person name="Danchin A."/>
            <person name="Diard M."/>
            <person name="Dossat C."/>
            <person name="Karoui M.E."/>
            <person name="Frapy E."/>
            <person name="Garry L."/>
            <person name="Ghigo J.M."/>
            <person name="Gilles A.M."/>
            <person name="Johnson J."/>
            <person name="Le Bouguenec C."/>
            <person name="Lescat M."/>
            <person name="Mangenot S."/>
            <person name="Martinez-Jehanne V."/>
            <person name="Matic I."/>
            <person name="Nassif X."/>
            <person name="Oztas S."/>
            <person name="Petit M.A."/>
            <person name="Pichon C."/>
            <person name="Rouy Z."/>
            <person name="Ruf C.S."/>
            <person name="Schneider D."/>
            <person name="Tourret J."/>
            <person name="Vacherie B."/>
            <person name="Vallenet D."/>
            <person name="Medigue C."/>
            <person name="Rocha E.P.C."/>
            <person name="Denamur E."/>
        </authorList>
    </citation>
    <scope>NUCLEOTIDE SEQUENCE [LARGE SCALE GENOMIC DNA]</scope>
    <source>
        <strain>55989 / EAEC</strain>
    </source>
</reference>
<feature type="chain" id="PRO_1000123145" description="dCTP deaminase">
    <location>
        <begin position="1"/>
        <end position="193"/>
    </location>
</feature>
<feature type="region of interest" description="Disordered" evidence="2">
    <location>
        <begin position="169"/>
        <end position="193"/>
    </location>
</feature>
<feature type="active site" description="Proton donor/acceptor" evidence="1">
    <location>
        <position position="138"/>
    </location>
</feature>
<feature type="binding site" evidence="1">
    <location>
        <begin position="110"/>
        <end position="115"/>
    </location>
    <ligand>
        <name>dCTP</name>
        <dbReference type="ChEBI" id="CHEBI:61481"/>
    </ligand>
</feature>
<feature type="binding site" evidence="1">
    <location>
        <position position="128"/>
    </location>
    <ligand>
        <name>dCTP</name>
        <dbReference type="ChEBI" id="CHEBI:61481"/>
    </ligand>
</feature>
<feature type="binding site" evidence="1">
    <location>
        <begin position="136"/>
        <end position="138"/>
    </location>
    <ligand>
        <name>dCTP</name>
        <dbReference type="ChEBI" id="CHEBI:61481"/>
    </ligand>
</feature>
<feature type="binding site" evidence="1">
    <location>
        <position position="171"/>
    </location>
    <ligand>
        <name>dCTP</name>
        <dbReference type="ChEBI" id="CHEBI:61481"/>
    </ligand>
</feature>
<feature type="binding site" evidence="1">
    <location>
        <position position="178"/>
    </location>
    <ligand>
        <name>dCTP</name>
        <dbReference type="ChEBI" id="CHEBI:61481"/>
    </ligand>
</feature>
<feature type="binding site" evidence="1">
    <location>
        <position position="182"/>
    </location>
    <ligand>
        <name>dCTP</name>
        <dbReference type="ChEBI" id="CHEBI:61481"/>
    </ligand>
</feature>
<evidence type="ECO:0000255" key="1">
    <source>
        <dbReference type="HAMAP-Rule" id="MF_00146"/>
    </source>
</evidence>
<evidence type="ECO:0000256" key="2">
    <source>
        <dbReference type="SAM" id="MobiDB-lite"/>
    </source>
</evidence>
<accession>B7L9T9</accession>
<comment type="function">
    <text evidence="1">Catalyzes the deamination of dCTP to dUTP.</text>
</comment>
<comment type="catalytic activity">
    <reaction evidence="1">
        <text>dCTP + H2O + H(+) = dUTP + NH4(+)</text>
        <dbReference type="Rhea" id="RHEA:22680"/>
        <dbReference type="ChEBI" id="CHEBI:15377"/>
        <dbReference type="ChEBI" id="CHEBI:15378"/>
        <dbReference type="ChEBI" id="CHEBI:28938"/>
        <dbReference type="ChEBI" id="CHEBI:61481"/>
        <dbReference type="ChEBI" id="CHEBI:61555"/>
        <dbReference type="EC" id="3.5.4.13"/>
    </reaction>
</comment>
<comment type="pathway">
    <text evidence="1">Pyrimidine metabolism; dUMP biosynthesis; dUMP from dCTP (dUTP route): step 1/2.</text>
</comment>
<comment type="subunit">
    <text evidence="1">Homotrimer.</text>
</comment>
<comment type="similarity">
    <text evidence="1">Belongs to the dCTP deaminase family.</text>
</comment>
<gene>
    <name evidence="1" type="primary">dcd</name>
    <name type="ordered locus">EC55989_2321</name>
</gene>
<organism>
    <name type="scientific">Escherichia coli (strain 55989 / EAEC)</name>
    <dbReference type="NCBI Taxonomy" id="585055"/>
    <lineage>
        <taxon>Bacteria</taxon>
        <taxon>Pseudomonadati</taxon>
        <taxon>Pseudomonadota</taxon>
        <taxon>Gammaproteobacteria</taxon>
        <taxon>Enterobacterales</taxon>
        <taxon>Enterobacteriaceae</taxon>
        <taxon>Escherichia</taxon>
    </lineage>
</organism>
<name>DCD_ECO55</name>
<keyword id="KW-0378">Hydrolase</keyword>
<keyword id="KW-0546">Nucleotide metabolism</keyword>
<keyword id="KW-0547">Nucleotide-binding</keyword>
<keyword id="KW-1185">Reference proteome</keyword>
<sequence>MRLCDRDIEAWLDEGRLSINPRPPVERINGATVDVRLGNKFRTFRGHTAAFIDLSGPKDEVSAALDRVMSDEIVLDEGEAFYLHPGELALAVTLESVTLPADLVGWLDGRSSLARLGLMVHVTAHRIDPGWSGCIVLEFYNSGKLPLALRPGMLIGALSFEPLSGPAARPYNRREDAKYRNQQGAVASRIDKD</sequence>